<proteinExistence type="evidence at protein level"/>
<keyword id="KW-0002">3D-structure</keyword>
<keyword id="KW-0067">ATP-binding</keyword>
<keyword id="KW-0315">Glutamine amidotransferase</keyword>
<keyword id="KW-0436">Ligase</keyword>
<keyword id="KW-0547">Nucleotide-binding</keyword>
<keyword id="KW-0597">Phosphoprotein</keyword>
<keyword id="KW-1267">Proteomics identification</keyword>
<keyword id="KW-0665">Pyrimidine biosynthesis</keyword>
<keyword id="KW-1185">Reference proteome</keyword>
<accession>Q9NRF8</accession>
<accession>B3KWM2</accession>
<accession>Q9BRI0</accession>
<accession>Q9H809</accession>
<accession>Q9H8K9</accession>
<protein>
    <recommendedName>
        <fullName>CTP synthase 2</fullName>
        <ecNumber>6.3.4.2</ecNumber>
    </recommendedName>
    <alternativeName>
        <fullName>CTP synthetase 2</fullName>
    </alternativeName>
    <alternativeName>
        <fullName>UTP--ammonia ligase 2</fullName>
    </alternativeName>
</protein>
<dbReference type="EC" id="6.3.4.2"/>
<dbReference type="EMBL" id="AF226667">
    <property type="protein sequence ID" value="AAF91241.1"/>
    <property type="molecule type" value="mRNA"/>
</dbReference>
<dbReference type="EMBL" id="AK023549">
    <property type="protein sequence ID" value="BAB14607.1"/>
    <property type="molecule type" value="mRNA"/>
</dbReference>
<dbReference type="EMBL" id="AK024070">
    <property type="protein sequence ID" value="BAB14814.1"/>
    <property type="molecule type" value="mRNA"/>
</dbReference>
<dbReference type="EMBL" id="AK125332">
    <property type="protein sequence ID" value="BAG54184.1"/>
    <property type="molecule type" value="mRNA"/>
</dbReference>
<dbReference type="EMBL" id="AK125348">
    <property type="protein sequence ID" value="BAG54188.1"/>
    <property type="molecule type" value="mRNA"/>
</dbReference>
<dbReference type="EMBL" id="AC073909">
    <property type="status" value="NOT_ANNOTATED_CDS"/>
    <property type="molecule type" value="Genomic_DNA"/>
</dbReference>
<dbReference type="EMBL" id="AL445467">
    <property type="status" value="NOT_ANNOTATED_CDS"/>
    <property type="molecule type" value="Genomic_DNA"/>
</dbReference>
<dbReference type="EMBL" id="CH471074">
    <property type="protein sequence ID" value="EAW98912.1"/>
    <property type="molecule type" value="Genomic_DNA"/>
</dbReference>
<dbReference type="EMBL" id="BC006256">
    <property type="protein sequence ID" value="AAH06256.2"/>
    <property type="molecule type" value="mRNA"/>
</dbReference>
<dbReference type="EMBL" id="BC034986">
    <property type="protein sequence ID" value="AAH34986.1"/>
    <property type="molecule type" value="mRNA"/>
</dbReference>
<dbReference type="CCDS" id="CCDS14175.1"/>
<dbReference type="RefSeq" id="NP_001137474.1">
    <property type="nucleotide sequence ID" value="NM_001144002.2"/>
</dbReference>
<dbReference type="RefSeq" id="NP_062831.3">
    <property type="nucleotide sequence ID" value="NM_019857.4"/>
</dbReference>
<dbReference type="RefSeq" id="NP_787055.1">
    <property type="nucleotide sequence ID" value="NM_175859.3"/>
</dbReference>
<dbReference type="RefSeq" id="XP_005274619.1">
    <property type="nucleotide sequence ID" value="XM_005274562.3"/>
</dbReference>
<dbReference type="RefSeq" id="XP_006724566.1">
    <property type="nucleotide sequence ID" value="XM_006724503.4"/>
</dbReference>
<dbReference type="RefSeq" id="XP_024308176.1">
    <property type="nucleotide sequence ID" value="XM_024452408.2"/>
</dbReference>
<dbReference type="RefSeq" id="XP_047298215.1">
    <property type="nucleotide sequence ID" value="XM_047442259.1"/>
</dbReference>
<dbReference type="RefSeq" id="XP_047298216.1">
    <property type="nucleotide sequence ID" value="XM_047442260.1"/>
</dbReference>
<dbReference type="RefSeq" id="XP_047298217.1">
    <property type="nucleotide sequence ID" value="XM_047442261.1"/>
</dbReference>
<dbReference type="RefSeq" id="XP_054183388.1">
    <property type="nucleotide sequence ID" value="XM_054327413.1"/>
</dbReference>
<dbReference type="RefSeq" id="XP_054183389.1">
    <property type="nucleotide sequence ID" value="XM_054327414.1"/>
</dbReference>
<dbReference type="RefSeq" id="XP_054183390.1">
    <property type="nucleotide sequence ID" value="XM_054327415.1"/>
</dbReference>
<dbReference type="PDB" id="2V4U">
    <property type="method" value="X-ray"/>
    <property type="resolution" value="2.30 A"/>
    <property type="chains" value="A=297-562"/>
</dbReference>
<dbReference type="PDB" id="2VKT">
    <property type="method" value="X-ray"/>
    <property type="resolution" value="2.50 A"/>
    <property type="chains" value="A=297-562"/>
</dbReference>
<dbReference type="PDB" id="3IHL">
    <property type="method" value="X-ray"/>
    <property type="resolution" value="2.80 A"/>
    <property type="chains" value="A/B=1-275"/>
</dbReference>
<dbReference type="PDB" id="6PK4">
    <property type="method" value="EM"/>
    <property type="resolution" value="3.50 A"/>
    <property type="chains" value="A/B/C/D=1-586"/>
</dbReference>
<dbReference type="PDB" id="6PK7">
    <property type="method" value="EM"/>
    <property type="resolution" value="3.10 A"/>
    <property type="chains" value="A/D/E/F=1-586"/>
</dbReference>
<dbReference type="PDB" id="7MH1">
    <property type="method" value="EM"/>
    <property type="resolution" value="2.80 A"/>
    <property type="chains" value="H/J/K/L=1-586"/>
</dbReference>
<dbReference type="PDB" id="7MIH">
    <property type="method" value="EM"/>
    <property type="resolution" value="2.80 A"/>
    <property type="chains" value="A/B/C/E=1-586"/>
</dbReference>
<dbReference type="PDB" id="7MII">
    <property type="method" value="EM"/>
    <property type="resolution" value="2.70 A"/>
    <property type="chains" value="A/B/C/E=1-586"/>
</dbReference>
<dbReference type="PDBsum" id="2V4U"/>
<dbReference type="PDBsum" id="2VKT"/>
<dbReference type="PDBsum" id="3IHL"/>
<dbReference type="PDBsum" id="6PK4"/>
<dbReference type="PDBsum" id="6PK7"/>
<dbReference type="PDBsum" id="7MH1"/>
<dbReference type="PDBsum" id="7MIH"/>
<dbReference type="PDBsum" id="7MII"/>
<dbReference type="EMDB" id="EMD-20354"/>
<dbReference type="EMDB" id="EMD-20355"/>
<dbReference type="EMDB" id="EMD-23833"/>
<dbReference type="EMDB" id="EMD-23851"/>
<dbReference type="EMDB" id="EMD-23852"/>
<dbReference type="SMR" id="Q9NRF8"/>
<dbReference type="BioGRID" id="121144">
    <property type="interactions" value="171"/>
</dbReference>
<dbReference type="FunCoup" id="Q9NRF8">
    <property type="interactions" value="663"/>
</dbReference>
<dbReference type="IntAct" id="Q9NRF8">
    <property type="interactions" value="61"/>
</dbReference>
<dbReference type="STRING" id="9606.ENSP00000401264"/>
<dbReference type="BindingDB" id="Q9NRF8"/>
<dbReference type="ChEMBL" id="CHEMBL5291524"/>
<dbReference type="GuidetoPHARMACOLOGY" id="3216"/>
<dbReference type="MEROPS" id="C26.966"/>
<dbReference type="GlyGen" id="Q9NRF8">
    <property type="glycosylation" value="1 site, 1 O-linked glycan (1 site)"/>
</dbReference>
<dbReference type="iPTMnet" id="Q9NRF8"/>
<dbReference type="PhosphoSitePlus" id="Q9NRF8"/>
<dbReference type="SwissPalm" id="Q9NRF8"/>
<dbReference type="BioMuta" id="CTPS2"/>
<dbReference type="DMDM" id="74752919"/>
<dbReference type="jPOST" id="Q9NRF8"/>
<dbReference type="MassIVE" id="Q9NRF8"/>
<dbReference type="PaxDb" id="9606-ENSP00000401264"/>
<dbReference type="PeptideAtlas" id="Q9NRF8"/>
<dbReference type="ProteomicsDB" id="82349"/>
<dbReference type="Pumba" id="Q9NRF8"/>
<dbReference type="Antibodypedia" id="337">
    <property type="antibodies" value="204 antibodies from 27 providers"/>
</dbReference>
<dbReference type="DNASU" id="56474"/>
<dbReference type="Ensembl" id="ENST00000359276.9">
    <property type="protein sequence ID" value="ENSP00000352222.4"/>
    <property type="gene ID" value="ENSG00000047230.15"/>
</dbReference>
<dbReference type="Ensembl" id="ENST00000380241.7">
    <property type="protein sequence ID" value="ENSP00000369590.3"/>
    <property type="gene ID" value="ENSG00000047230.15"/>
</dbReference>
<dbReference type="Ensembl" id="ENST00000443824.5">
    <property type="protein sequence ID" value="ENSP00000401264.1"/>
    <property type="gene ID" value="ENSG00000047230.15"/>
</dbReference>
<dbReference type="GeneID" id="56474"/>
<dbReference type="KEGG" id="hsa:56474"/>
<dbReference type="MANE-Select" id="ENST00000359276.9">
    <property type="protein sequence ID" value="ENSP00000352222.4"/>
    <property type="RefSeq nucleotide sequence ID" value="NM_175859.3"/>
    <property type="RefSeq protein sequence ID" value="NP_787055.1"/>
</dbReference>
<dbReference type="UCSC" id="uc004cxk.4">
    <property type="organism name" value="human"/>
</dbReference>
<dbReference type="AGR" id="HGNC:2520"/>
<dbReference type="CTD" id="56474"/>
<dbReference type="DisGeNET" id="56474"/>
<dbReference type="GeneCards" id="CTPS2"/>
<dbReference type="HGNC" id="HGNC:2520">
    <property type="gene designation" value="CTPS2"/>
</dbReference>
<dbReference type="HPA" id="ENSG00000047230">
    <property type="expression patterns" value="Low tissue specificity"/>
</dbReference>
<dbReference type="MIM" id="300380">
    <property type="type" value="gene"/>
</dbReference>
<dbReference type="neXtProt" id="NX_Q9NRF8"/>
<dbReference type="OpenTargets" id="ENSG00000047230"/>
<dbReference type="PharmGKB" id="PA27021"/>
<dbReference type="VEuPathDB" id="HostDB:ENSG00000047230"/>
<dbReference type="eggNOG" id="KOG2387">
    <property type="taxonomic scope" value="Eukaryota"/>
</dbReference>
<dbReference type="GeneTree" id="ENSGT00910000144179"/>
<dbReference type="HOGENOM" id="CLU_011675_5_0_1"/>
<dbReference type="InParanoid" id="Q9NRF8"/>
<dbReference type="OMA" id="HAAMYCH"/>
<dbReference type="OrthoDB" id="1739076at2759"/>
<dbReference type="PAN-GO" id="Q9NRF8">
    <property type="GO annotations" value="6 GO annotations based on evolutionary models"/>
</dbReference>
<dbReference type="PhylomeDB" id="Q9NRF8"/>
<dbReference type="TreeFam" id="TF300379"/>
<dbReference type="BioCyc" id="MetaCyc:HS00585-MONOMER"/>
<dbReference type="BRENDA" id="6.3.4.2">
    <property type="organism ID" value="2681"/>
</dbReference>
<dbReference type="PathwayCommons" id="Q9NRF8"/>
<dbReference type="Reactome" id="R-HSA-499943">
    <property type="pathway name" value="Interconversion of nucleotide di- and triphosphates"/>
</dbReference>
<dbReference type="SignaLink" id="Q9NRF8"/>
<dbReference type="SIGNOR" id="Q9NRF8"/>
<dbReference type="UniPathway" id="UPA00159">
    <property type="reaction ID" value="UER00277"/>
</dbReference>
<dbReference type="BioGRID-ORCS" id="56474">
    <property type="hits" value="14 hits in 777 CRISPR screens"/>
</dbReference>
<dbReference type="CD-CODE" id="91857CE7">
    <property type="entry name" value="Nucleolus"/>
</dbReference>
<dbReference type="ChiTaRS" id="CTPS2">
    <property type="organism name" value="human"/>
</dbReference>
<dbReference type="EvolutionaryTrace" id="Q9NRF8"/>
<dbReference type="GeneWiki" id="CTPS2"/>
<dbReference type="GenomeRNAi" id="56474"/>
<dbReference type="Pharos" id="Q9NRF8">
    <property type="development level" value="Tbio"/>
</dbReference>
<dbReference type="PRO" id="PR:Q9NRF8"/>
<dbReference type="Proteomes" id="UP000005640">
    <property type="component" value="Chromosome X"/>
</dbReference>
<dbReference type="RNAct" id="Q9NRF8">
    <property type="molecule type" value="protein"/>
</dbReference>
<dbReference type="Bgee" id="ENSG00000047230">
    <property type="expression patterns" value="Expressed in jejunal mucosa and 164 other cell types or tissues"/>
</dbReference>
<dbReference type="ExpressionAtlas" id="Q9NRF8">
    <property type="expression patterns" value="baseline and differential"/>
</dbReference>
<dbReference type="GO" id="GO:0097268">
    <property type="term" value="C:cytoophidium"/>
    <property type="evidence" value="ECO:0000318"/>
    <property type="project" value="GO_Central"/>
</dbReference>
<dbReference type="GO" id="GO:0005737">
    <property type="term" value="C:cytoplasm"/>
    <property type="evidence" value="ECO:0000318"/>
    <property type="project" value="GO_Central"/>
</dbReference>
<dbReference type="GO" id="GO:0005829">
    <property type="term" value="C:cytosol"/>
    <property type="evidence" value="ECO:0000304"/>
    <property type="project" value="Reactome"/>
</dbReference>
<dbReference type="GO" id="GO:0005739">
    <property type="term" value="C:mitochondrion"/>
    <property type="evidence" value="ECO:0006056"/>
    <property type="project" value="FlyBase"/>
</dbReference>
<dbReference type="GO" id="GO:0005524">
    <property type="term" value="F:ATP binding"/>
    <property type="evidence" value="ECO:0007669"/>
    <property type="project" value="UniProtKB-KW"/>
</dbReference>
<dbReference type="GO" id="GO:0003883">
    <property type="term" value="F:CTP synthase activity"/>
    <property type="evidence" value="ECO:0000318"/>
    <property type="project" value="GO_Central"/>
</dbReference>
<dbReference type="GO" id="GO:0042802">
    <property type="term" value="F:identical protein binding"/>
    <property type="evidence" value="ECO:0000353"/>
    <property type="project" value="IntAct"/>
</dbReference>
<dbReference type="GO" id="GO:0044210">
    <property type="term" value="P:'de novo' CTP biosynthetic process"/>
    <property type="evidence" value="ECO:0007669"/>
    <property type="project" value="UniProtKB-UniPathway"/>
</dbReference>
<dbReference type="GO" id="GO:0006241">
    <property type="term" value="P:CTP biosynthetic process"/>
    <property type="evidence" value="ECO:0000318"/>
    <property type="project" value="GO_Central"/>
</dbReference>
<dbReference type="GO" id="GO:0019856">
    <property type="term" value="P:pyrimidine nucleobase biosynthetic process"/>
    <property type="evidence" value="ECO:0000318"/>
    <property type="project" value="GO_Central"/>
</dbReference>
<dbReference type="GO" id="GO:0006220">
    <property type="term" value="P:pyrimidine nucleotide metabolic process"/>
    <property type="evidence" value="ECO:0000304"/>
    <property type="project" value="ProtInc"/>
</dbReference>
<dbReference type="CDD" id="cd03113">
    <property type="entry name" value="CTPS_N"/>
    <property type="match status" value="1"/>
</dbReference>
<dbReference type="CDD" id="cd01746">
    <property type="entry name" value="GATase1_CTP_Synthase"/>
    <property type="match status" value="1"/>
</dbReference>
<dbReference type="FunFam" id="3.40.50.300:FF:000207">
    <property type="entry name" value="CTP synthase"/>
    <property type="match status" value="1"/>
</dbReference>
<dbReference type="FunFam" id="3.40.50.880:FF:000005">
    <property type="entry name" value="CTP synthase"/>
    <property type="match status" value="1"/>
</dbReference>
<dbReference type="Gene3D" id="3.40.50.880">
    <property type="match status" value="1"/>
</dbReference>
<dbReference type="Gene3D" id="3.40.50.300">
    <property type="entry name" value="P-loop containing nucleotide triphosphate hydrolases"/>
    <property type="match status" value="1"/>
</dbReference>
<dbReference type="InterPro" id="IPR029062">
    <property type="entry name" value="Class_I_gatase-like"/>
</dbReference>
<dbReference type="InterPro" id="IPR004468">
    <property type="entry name" value="CTP_synthase"/>
</dbReference>
<dbReference type="InterPro" id="IPR017456">
    <property type="entry name" value="CTP_synthase_N"/>
</dbReference>
<dbReference type="InterPro" id="IPR017926">
    <property type="entry name" value="GATASE"/>
</dbReference>
<dbReference type="InterPro" id="IPR033828">
    <property type="entry name" value="GATase1_CTP_Synthase"/>
</dbReference>
<dbReference type="InterPro" id="IPR027417">
    <property type="entry name" value="P-loop_NTPase"/>
</dbReference>
<dbReference type="NCBIfam" id="NF003792">
    <property type="entry name" value="PRK05380.1"/>
    <property type="match status" value="1"/>
</dbReference>
<dbReference type="NCBIfam" id="TIGR00337">
    <property type="entry name" value="PyrG"/>
    <property type="match status" value="1"/>
</dbReference>
<dbReference type="PANTHER" id="PTHR11550">
    <property type="entry name" value="CTP SYNTHASE"/>
    <property type="match status" value="1"/>
</dbReference>
<dbReference type="PANTHER" id="PTHR11550:SF2">
    <property type="entry name" value="CTP SYNTHASE 2"/>
    <property type="match status" value="1"/>
</dbReference>
<dbReference type="Pfam" id="PF06418">
    <property type="entry name" value="CTP_synth_N"/>
    <property type="match status" value="1"/>
</dbReference>
<dbReference type="Pfam" id="PF00117">
    <property type="entry name" value="GATase"/>
    <property type="match status" value="1"/>
</dbReference>
<dbReference type="SUPFAM" id="SSF52317">
    <property type="entry name" value="Class I glutamine amidotransferase-like"/>
    <property type="match status" value="1"/>
</dbReference>
<dbReference type="SUPFAM" id="SSF52540">
    <property type="entry name" value="P-loop containing nucleoside triphosphate hydrolases"/>
    <property type="match status" value="1"/>
</dbReference>
<dbReference type="PROSITE" id="PS51273">
    <property type="entry name" value="GATASE_TYPE_1"/>
    <property type="match status" value="1"/>
</dbReference>
<sequence length="586" mass="65678">MKYILVTGGVISGIGKGIIASSIGTILKSCGLRVTAIKIDPYINIDAGTFSPYEHGEVFVLNDGGEVDLDLGNYERFLDINLYKDNNITTGKIYQHVINKERRGDYLGKTVQVVPHITDAVQEWVMNQAKVPVDGNKEEPQICVIELGGTIGDIEGMPFVEAFRQFQFKAKRENFCNIHVSLVPQLSATGEQKTKPTQNSVRALRGLGLSPDLIVCRSSTPIEMAVKEKISMFCHVNPEQVICIHDVSSTYRVPVLLEEQSIVKYFKERLHLPIGDSASNLLFKWRNMADRYERLQKICSIALVGKYTKLRDCYASVFKALEHSALAINHKLNLMYIDSIDLEKITETEDPVKFHEAWQKLCKADGILVPGGFGIRGTLGKLQAISWARTKKIPFLGVCLGMQLAVIEFARNCLNLKDADSTEFRPNAPVPLVIDMPEHNPGNLGGTMRLGIRRTVFKTENSILRKLYGDVPFIEERHRHRFEVNPNLIKQFEQNDLSFVGQDVDGDRMEIIELANHPYFVGVQFHPEFSSRPMKPSPPYLGLLLAATGNLNAYLQQGCKLSSSDRYSDASDDSFSEPRIAELEIS</sequence>
<comment type="function">
    <text evidence="3 4">Catalyzes the ATP-dependent amination of UTP to CTP with either L-glutamine or ammonia as the source of nitrogen. Constitutes the rate-limiting enzyme in the synthesis of cytosine nucleotides.</text>
</comment>
<comment type="catalytic activity">
    <reaction>
        <text>UTP + L-glutamine + ATP + H2O = CTP + L-glutamate + ADP + phosphate + 2 H(+)</text>
        <dbReference type="Rhea" id="RHEA:26426"/>
        <dbReference type="ChEBI" id="CHEBI:15377"/>
        <dbReference type="ChEBI" id="CHEBI:15378"/>
        <dbReference type="ChEBI" id="CHEBI:29985"/>
        <dbReference type="ChEBI" id="CHEBI:30616"/>
        <dbReference type="ChEBI" id="CHEBI:37563"/>
        <dbReference type="ChEBI" id="CHEBI:43474"/>
        <dbReference type="ChEBI" id="CHEBI:46398"/>
        <dbReference type="ChEBI" id="CHEBI:58359"/>
        <dbReference type="ChEBI" id="CHEBI:456216"/>
        <dbReference type="EC" id="6.3.4.2"/>
    </reaction>
</comment>
<comment type="pathway">
    <text>Pyrimidine metabolism; CTP biosynthesis via de novo pathway; CTP from UDP: step 2/2.</text>
</comment>
<comment type="interaction">
    <interactant intactId="EBI-740874">
        <id>Q9NRF8</id>
    </interactant>
    <interactant intactId="EBI-1042983">
        <id>P17812</id>
        <label>CTPS1</label>
    </interactant>
    <organismsDiffer>false</organismsDiffer>
    <experiments>6</experiments>
</comment>
<comment type="interaction">
    <interactant intactId="EBI-740874">
        <id>Q9NRF8</id>
    </interactant>
    <interactant intactId="EBI-740874">
        <id>Q9NRF8</id>
        <label>CTPS2</label>
    </interactant>
    <organismsDiffer>false</organismsDiffer>
    <experiments>5</experiments>
</comment>
<comment type="interaction">
    <interactant intactId="EBI-740874">
        <id>Q9NRF8</id>
    </interactant>
    <interactant intactId="EBI-742688">
        <id>Q9NZD8</id>
        <label>SPG21</label>
    </interactant>
    <organismsDiffer>false</organismsDiffer>
    <experiments>4</experiments>
</comment>
<comment type="similarity">
    <text evidence="5">Belongs to the CTP synthase family.</text>
</comment>
<name>PYRG2_HUMAN</name>
<evidence type="ECO:0000255" key="1">
    <source>
        <dbReference type="PROSITE-ProRule" id="PRU00605"/>
    </source>
</evidence>
<evidence type="ECO:0000256" key="2">
    <source>
        <dbReference type="SAM" id="MobiDB-lite"/>
    </source>
</evidence>
<evidence type="ECO:0000269" key="3">
    <source>
    </source>
</evidence>
<evidence type="ECO:0000269" key="4">
    <source>
    </source>
</evidence>
<evidence type="ECO:0000305" key="5"/>
<evidence type="ECO:0007744" key="6">
    <source>
    </source>
</evidence>
<evidence type="ECO:0007744" key="7">
    <source>
    </source>
</evidence>
<evidence type="ECO:0007744" key="8">
    <source>
    </source>
</evidence>
<evidence type="ECO:0007744" key="9">
    <source>
    </source>
</evidence>
<evidence type="ECO:0007744" key="10">
    <source>
    </source>
</evidence>
<evidence type="ECO:0007744" key="11">
    <source>
    </source>
</evidence>
<evidence type="ECO:0007829" key="12">
    <source>
        <dbReference type="PDB" id="2V4U"/>
    </source>
</evidence>
<evidence type="ECO:0007829" key="13">
    <source>
        <dbReference type="PDB" id="6PK4"/>
    </source>
</evidence>
<evidence type="ECO:0007829" key="14">
    <source>
        <dbReference type="PDB" id="6PK7"/>
    </source>
</evidence>
<evidence type="ECO:0007829" key="15">
    <source>
        <dbReference type="PDB" id="7MII"/>
    </source>
</evidence>
<organism>
    <name type="scientific">Homo sapiens</name>
    <name type="common">Human</name>
    <dbReference type="NCBI Taxonomy" id="9606"/>
    <lineage>
        <taxon>Eukaryota</taxon>
        <taxon>Metazoa</taxon>
        <taxon>Chordata</taxon>
        <taxon>Craniata</taxon>
        <taxon>Vertebrata</taxon>
        <taxon>Euteleostomi</taxon>
        <taxon>Mammalia</taxon>
        <taxon>Eutheria</taxon>
        <taxon>Euarchontoglires</taxon>
        <taxon>Primates</taxon>
        <taxon>Haplorrhini</taxon>
        <taxon>Catarrhini</taxon>
        <taxon>Hominidae</taxon>
        <taxon>Homo</taxon>
    </lineage>
</organism>
<feature type="chain" id="PRO_0000247033" description="CTP synthase 2">
    <location>
        <begin position="1"/>
        <end position="586"/>
    </location>
</feature>
<feature type="domain" description="Glutamine amidotransferase type-1" evidence="1">
    <location>
        <begin position="300"/>
        <end position="554"/>
    </location>
</feature>
<feature type="region of interest" description="Disordered" evidence="2">
    <location>
        <begin position="563"/>
        <end position="586"/>
    </location>
</feature>
<feature type="active site" description="For GATase activity" evidence="1">
    <location>
        <position position="399"/>
    </location>
</feature>
<feature type="active site" description="For GATase activity" evidence="1">
    <location>
        <position position="526"/>
    </location>
</feature>
<feature type="active site" description="For GATase activity" evidence="1">
    <location>
        <position position="528"/>
    </location>
</feature>
<feature type="modified residue" description="Phosphoserine" evidence="7 8 9 10 11">
    <location>
        <position position="568"/>
    </location>
</feature>
<feature type="modified residue" description="Phosphoserine" evidence="6 7 8 9 10 11">
    <location>
        <position position="571"/>
    </location>
</feature>
<feature type="modified residue" description="Phosphoserine" evidence="7 8 10 11">
    <location>
        <position position="574"/>
    </location>
</feature>
<feature type="sequence conflict" description="In Ref. 2; BAB14814." evidence="5" ref="2">
    <original>T</original>
    <variation>S</variation>
    <location>
        <position position="220"/>
    </location>
</feature>
<feature type="sequence conflict" description="In Ref. 2; BAB14607." evidence="5" ref="2">
    <original>F</original>
    <variation>L</variation>
    <location>
        <position position="233"/>
    </location>
</feature>
<feature type="sequence conflict" description="In Ref. 2; BAB14607." evidence="5" ref="2">
    <original>V</original>
    <variation>A</variation>
    <location>
        <position position="304"/>
    </location>
</feature>
<feature type="strand" evidence="15">
    <location>
        <begin position="2"/>
        <end position="10"/>
    </location>
</feature>
<feature type="helix" evidence="15">
    <location>
        <begin position="12"/>
        <end position="14"/>
    </location>
</feature>
<feature type="helix" evidence="15">
    <location>
        <begin position="16"/>
        <end position="29"/>
    </location>
</feature>
<feature type="strand" evidence="15">
    <location>
        <begin position="34"/>
        <end position="40"/>
    </location>
</feature>
<feature type="helix" evidence="15">
    <location>
        <begin position="47"/>
        <end position="49"/>
    </location>
</feature>
<feature type="turn" evidence="15">
    <location>
        <begin position="52"/>
        <end position="54"/>
    </location>
</feature>
<feature type="strand" evidence="15">
    <location>
        <begin position="58"/>
        <end position="60"/>
    </location>
</feature>
<feature type="strand" evidence="13">
    <location>
        <begin position="62"/>
        <end position="64"/>
    </location>
</feature>
<feature type="strand" evidence="15">
    <location>
        <begin position="66"/>
        <end position="68"/>
    </location>
</feature>
<feature type="helix" evidence="15">
    <location>
        <begin position="70"/>
        <end position="78"/>
    </location>
</feature>
<feature type="helix" evidence="15">
    <location>
        <begin position="84"/>
        <end position="86"/>
    </location>
</feature>
<feature type="strand" evidence="15">
    <location>
        <begin position="87"/>
        <end position="89"/>
    </location>
</feature>
<feature type="helix" evidence="15">
    <location>
        <begin position="90"/>
        <end position="102"/>
    </location>
</feature>
<feature type="turn" evidence="15">
    <location>
        <begin position="103"/>
        <end position="108"/>
    </location>
</feature>
<feature type="helix" evidence="15">
    <location>
        <begin position="113"/>
        <end position="129"/>
    </location>
</feature>
<feature type="strand" evidence="15">
    <location>
        <begin position="134"/>
        <end position="136"/>
    </location>
</feature>
<feature type="strand" evidence="15">
    <location>
        <begin position="141"/>
        <end position="147"/>
    </location>
</feature>
<feature type="strand" evidence="14">
    <location>
        <begin position="151"/>
        <end position="153"/>
    </location>
</feature>
<feature type="helix" evidence="15">
    <location>
        <begin position="154"/>
        <end position="156"/>
    </location>
</feature>
<feature type="helix" evidence="15">
    <location>
        <begin position="157"/>
        <end position="168"/>
    </location>
</feature>
<feature type="helix" evidence="15">
    <location>
        <begin position="172"/>
        <end position="174"/>
    </location>
</feature>
<feature type="strand" evidence="15">
    <location>
        <begin position="175"/>
        <end position="182"/>
    </location>
</feature>
<feature type="turn" evidence="15">
    <location>
        <begin position="187"/>
        <end position="189"/>
    </location>
</feature>
<feature type="helix" evidence="15">
    <location>
        <begin position="195"/>
        <end position="206"/>
    </location>
</feature>
<feature type="strand" evidence="15">
    <location>
        <begin position="212"/>
        <end position="220"/>
    </location>
</feature>
<feature type="helix" evidence="15">
    <location>
        <begin position="224"/>
        <end position="233"/>
    </location>
</feature>
<feature type="helix" evidence="15">
    <location>
        <begin position="238"/>
        <end position="240"/>
    </location>
</feature>
<feature type="strand" evidence="15">
    <location>
        <begin position="241"/>
        <end position="245"/>
    </location>
</feature>
<feature type="helix" evidence="15">
    <location>
        <begin position="252"/>
        <end position="258"/>
    </location>
</feature>
<feature type="turn" evidence="15">
    <location>
        <begin position="259"/>
        <end position="261"/>
    </location>
</feature>
<feature type="helix" evidence="15">
    <location>
        <begin position="262"/>
        <end position="270"/>
    </location>
</feature>
<feature type="strand" evidence="14">
    <location>
        <begin position="276"/>
        <end position="278"/>
    </location>
</feature>
<feature type="helix" evidence="15">
    <location>
        <begin position="284"/>
        <end position="292"/>
    </location>
</feature>
<feature type="strand" evidence="12">
    <location>
        <begin position="297"/>
        <end position="306"/>
    </location>
</feature>
<feature type="helix" evidence="12">
    <location>
        <begin position="312"/>
        <end position="314"/>
    </location>
</feature>
<feature type="helix" evidence="12">
    <location>
        <begin position="315"/>
        <end position="327"/>
    </location>
</feature>
<feature type="strand" evidence="12">
    <location>
        <begin position="330"/>
        <end position="338"/>
    </location>
</feature>
<feature type="helix" evidence="12">
    <location>
        <begin position="339"/>
        <end position="342"/>
    </location>
</feature>
<feature type="helix" evidence="12">
    <location>
        <begin position="344"/>
        <end position="349"/>
    </location>
</feature>
<feature type="helix" evidence="12">
    <location>
        <begin position="351"/>
        <end position="363"/>
    </location>
</feature>
<feature type="strand" evidence="12">
    <location>
        <begin position="365"/>
        <end position="369"/>
    </location>
</feature>
<feature type="helix" evidence="12">
    <location>
        <begin position="378"/>
        <end position="390"/>
    </location>
</feature>
<feature type="strand" evidence="12">
    <location>
        <begin position="395"/>
        <end position="398"/>
    </location>
</feature>
<feature type="helix" evidence="12">
    <location>
        <begin position="400"/>
        <end position="413"/>
    </location>
</feature>
<feature type="strand" evidence="12">
    <location>
        <begin position="419"/>
        <end position="422"/>
    </location>
</feature>
<feature type="strand" evidence="12">
    <location>
        <begin position="429"/>
        <end position="435"/>
    </location>
</feature>
<feature type="strand" evidence="13">
    <location>
        <begin position="438"/>
        <end position="440"/>
    </location>
</feature>
<feature type="strand" evidence="13">
    <location>
        <begin position="443"/>
        <end position="447"/>
    </location>
</feature>
<feature type="strand" evidence="12">
    <location>
        <begin position="449"/>
        <end position="458"/>
    </location>
</feature>
<feature type="helix" evidence="12">
    <location>
        <begin position="463"/>
        <end position="467"/>
    </location>
</feature>
<feature type="strand" evidence="12">
    <location>
        <begin position="472"/>
        <end position="480"/>
    </location>
</feature>
<feature type="strand" evidence="12">
    <location>
        <begin position="482"/>
        <end position="484"/>
    </location>
</feature>
<feature type="helix" evidence="12">
    <location>
        <begin position="486"/>
        <end position="488"/>
    </location>
</feature>
<feature type="helix" evidence="12">
    <location>
        <begin position="490"/>
        <end position="492"/>
    </location>
</feature>
<feature type="strand" evidence="12">
    <location>
        <begin position="495"/>
        <end position="503"/>
    </location>
</feature>
<feature type="strand" evidence="12">
    <location>
        <begin position="508"/>
        <end position="518"/>
    </location>
</feature>
<feature type="strand" evidence="12">
    <location>
        <begin position="520"/>
        <end position="526"/>
    </location>
</feature>
<feature type="helix" evidence="12">
    <location>
        <begin position="527"/>
        <end position="530"/>
    </location>
</feature>
<feature type="strand" evidence="14">
    <location>
        <begin position="533"/>
        <end position="535"/>
    </location>
</feature>
<feature type="helix" evidence="12">
    <location>
        <begin position="538"/>
        <end position="548"/>
    </location>
</feature>
<feature type="helix" evidence="12">
    <location>
        <begin position="551"/>
        <end position="556"/>
    </location>
</feature>
<reference key="1">
    <citation type="journal article" date="2000" name="Biochim. Biophys. Acta">
        <title>Identification of a cDNA encoding an isoform of human CTP synthetase.</title>
        <authorList>
            <person name="van Kuilenburg A.B.P."/>
            <person name="Meinsma R."/>
            <person name="Vreken P."/>
            <person name="Waterham H.R."/>
            <person name="van Gennip A.H."/>
        </authorList>
    </citation>
    <scope>NUCLEOTIDE SEQUENCE [MRNA]</scope>
    <scope>FUNCTION</scope>
</reference>
<reference key="2">
    <citation type="journal article" date="2004" name="Nat. Genet.">
        <title>Complete sequencing and characterization of 21,243 full-length human cDNAs.</title>
        <authorList>
            <person name="Ota T."/>
            <person name="Suzuki Y."/>
            <person name="Nishikawa T."/>
            <person name="Otsuki T."/>
            <person name="Sugiyama T."/>
            <person name="Irie R."/>
            <person name="Wakamatsu A."/>
            <person name="Hayashi K."/>
            <person name="Sato H."/>
            <person name="Nagai K."/>
            <person name="Kimura K."/>
            <person name="Makita H."/>
            <person name="Sekine M."/>
            <person name="Obayashi M."/>
            <person name="Nishi T."/>
            <person name="Shibahara T."/>
            <person name="Tanaka T."/>
            <person name="Ishii S."/>
            <person name="Yamamoto J."/>
            <person name="Saito K."/>
            <person name="Kawai Y."/>
            <person name="Isono Y."/>
            <person name="Nakamura Y."/>
            <person name="Nagahari K."/>
            <person name="Murakami K."/>
            <person name="Yasuda T."/>
            <person name="Iwayanagi T."/>
            <person name="Wagatsuma M."/>
            <person name="Shiratori A."/>
            <person name="Sudo H."/>
            <person name="Hosoiri T."/>
            <person name="Kaku Y."/>
            <person name="Kodaira H."/>
            <person name="Kondo H."/>
            <person name="Sugawara M."/>
            <person name="Takahashi M."/>
            <person name="Kanda K."/>
            <person name="Yokoi T."/>
            <person name="Furuya T."/>
            <person name="Kikkawa E."/>
            <person name="Omura Y."/>
            <person name="Abe K."/>
            <person name="Kamihara K."/>
            <person name="Katsuta N."/>
            <person name="Sato K."/>
            <person name="Tanikawa M."/>
            <person name="Yamazaki M."/>
            <person name="Ninomiya K."/>
            <person name="Ishibashi T."/>
            <person name="Yamashita H."/>
            <person name="Murakawa K."/>
            <person name="Fujimori K."/>
            <person name="Tanai H."/>
            <person name="Kimata M."/>
            <person name="Watanabe M."/>
            <person name="Hiraoka S."/>
            <person name="Chiba Y."/>
            <person name="Ishida S."/>
            <person name="Ono Y."/>
            <person name="Takiguchi S."/>
            <person name="Watanabe S."/>
            <person name="Yosida M."/>
            <person name="Hotuta T."/>
            <person name="Kusano J."/>
            <person name="Kanehori K."/>
            <person name="Takahashi-Fujii A."/>
            <person name="Hara H."/>
            <person name="Tanase T.-O."/>
            <person name="Nomura Y."/>
            <person name="Togiya S."/>
            <person name="Komai F."/>
            <person name="Hara R."/>
            <person name="Takeuchi K."/>
            <person name="Arita M."/>
            <person name="Imose N."/>
            <person name="Musashino K."/>
            <person name="Yuuki H."/>
            <person name="Oshima A."/>
            <person name="Sasaki N."/>
            <person name="Aotsuka S."/>
            <person name="Yoshikawa Y."/>
            <person name="Matsunawa H."/>
            <person name="Ichihara T."/>
            <person name="Shiohata N."/>
            <person name="Sano S."/>
            <person name="Moriya S."/>
            <person name="Momiyama H."/>
            <person name="Satoh N."/>
            <person name="Takami S."/>
            <person name="Terashima Y."/>
            <person name="Suzuki O."/>
            <person name="Nakagawa S."/>
            <person name="Senoh A."/>
            <person name="Mizoguchi H."/>
            <person name="Goto Y."/>
            <person name="Shimizu F."/>
            <person name="Wakebe H."/>
            <person name="Hishigaki H."/>
            <person name="Watanabe T."/>
            <person name="Sugiyama A."/>
            <person name="Takemoto M."/>
            <person name="Kawakami B."/>
            <person name="Yamazaki M."/>
            <person name="Watanabe K."/>
            <person name="Kumagai A."/>
            <person name="Itakura S."/>
            <person name="Fukuzumi Y."/>
            <person name="Fujimori Y."/>
            <person name="Komiyama M."/>
            <person name="Tashiro H."/>
            <person name="Tanigami A."/>
            <person name="Fujiwara T."/>
            <person name="Ono T."/>
            <person name="Yamada K."/>
            <person name="Fujii Y."/>
            <person name="Ozaki K."/>
            <person name="Hirao M."/>
            <person name="Ohmori Y."/>
            <person name="Kawabata A."/>
            <person name="Hikiji T."/>
            <person name="Kobatake N."/>
            <person name="Inagaki H."/>
            <person name="Ikema Y."/>
            <person name="Okamoto S."/>
            <person name="Okitani R."/>
            <person name="Kawakami T."/>
            <person name="Noguchi S."/>
            <person name="Itoh T."/>
            <person name="Shigeta K."/>
            <person name="Senba T."/>
            <person name="Matsumura K."/>
            <person name="Nakajima Y."/>
            <person name="Mizuno T."/>
            <person name="Morinaga M."/>
            <person name="Sasaki M."/>
            <person name="Togashi T."/>
            <person name="Oyama M."/>
            <person name="Hata H."/>
            <person name="Watanabe M."/>
            <person name="Komatsu T."/>
            <person name="Mizushima-Sugano J."/>
            <person name="Satoh T."/>
            <person name="Shirai Y."/>
            <person name="Takahashi Y."/>
            <person name="Nakagawa K."/>
            <person name="Okumura K."/>
            <person name="Nagase T."/>
            <person name="Nomura N."/>
            <person name="Kikuchi H."/>
            <person name="Masuho Y."/>
            <person name="Yamashita R."/>
            <person name="Nakai K."/>
            <person name="Yada T."/>
            <person name="Nakamura Y."/>
            <person name="Ohara O."/>
            <person name="Isogai T."/>
            <person name="Sugano S."/>
        </authorList>
    </citation>
    <scope>NUCLEOTIDE SEQUENCE [LARGE SCALE MRNA]</scope>
    <source>
        <tissue>Placenta</tissue>
        <tissue>Retinoblastoma</tissue>
    </source>
</reference>
<reference key="3">
    <citation type="journal article" date="2005" name="Nature">
        <title>The DNA sequence of the human X chromosome.</title>
        <authorList>
            <person name="Ross M.T."/>
            <person name="Grafham D.V."/>
            <person name="Coffey A.J."/>
            <person name="Scherer S."/>
            <person name="McLay K."/>
            <person name="Muzny D."/>
            <person name="Platzer M."/>
            <person name="Howell G.R."/>
            <person name="Burrows C."/>
            <person name="Bird C.P."/>
            <person name="Frankish A."/>
            <person name="Lovell F.L."/>
            <person name="Howe K.L."/>
            <person name="Ashurst J.L."/>
            <person name="Fulton R.S."/>
            <person name="Sudbrak R."/>
            <person name="Wen G."/>
            <person name="Jones M.C."/>
            <person name="Hurles M.E."/>
            <person name="Andrews T.D."/>
            <person name="Scott C.E."/>
            <person name="Searle S."/>
            <person name="Ramser J."/>
            <person name="Whittaker A."/>
            <person name="Deadman R."/>
            <person name="Carter N.P."/>
            <person name="Hunt S.E."/>
            <person name="Chen R."/>
            <person name="Cree A."/>
            <person name="Gunaratne P."/>
            <person name="Havlak P."/>
            <person name="Hodgson A."/>
            <person name="Metzker M.L."/>
            <person name="Richards S."/>
            <person name="Scott G."/>
            <person name="Steffen D."/>
            <person name="Sodergren E."/>
            <person name="Wheeler D.A."/>
            <person name="Worley K.C."/>
            <person name="Ainscough R."/>
            <person name="Ambrose K.D."/>
            <person name="Ansari-Lari M.A."/>
            <person name="Aradhya S."/>
            <person name="Ashwell R.I."/>
            <person name="Babbage A.K."/>
            <person name="Bagguley C.L."/>
            <person name="Ballabio A."/>
            <person name="Banerjee R."/>
            <person name="Barker G.E."/>
            <person name="Barlow K.F."/>
            <person name="Barrett I.P."/>
            <person name="Bates K.N."/>
            <person name="Beare D.M."/>
            <person name="Beasley H."/>
            <person name="Beasley O."/>
            <person name="Beck A."/>
            <person name="Bethel G."/>
            <person name="Blechschmidt K."/>
            <person name="Brady N."/>
            <person name="Bray-Allen S."/>
            <person name="Bridgeman A.M."/>
            <person name="Brown A.J."/>
            <person name="Brown M.J."/>
            <person name="Bonnin D."/>
            <person name="Bruford E.A."/>
            <person name="Buhay C."/>
            <person name="Burch P."/>
            <person name="Burford D."/>
            <person name="Burgess J."/>
            <person name="Burrill W."/>
            <person name="Burton J."/>
            <person name="Bye J.M."/>
            <person name="Carder C."/>
            <person name="Carrel L."/>
            <person name="Chako J."/>
            <person name="Chapman J.C."/>
            <person name="Chavez D."/>
            <person name="Chen E."/>
            <person name="Chen G."/>
            <person name="Chen Y."/>
            <person name="Chen Z."/>
            <person name="Chinault C."/>
            <person name="Ciccodicola A."/>
            <person name="Clark S.Y."/>
            <person name="Clarke G."/>
            <person name="Clee C.M."/>
            <person name="Clegg S."/>
            <person name="Clerc-Blankenburg K."/>
            <person name="Clifford K."/>
            <person name="Cobley V."/>
            <person name="Cole C.G."/>
            <person name="Conquer J.S."/>
            <person name="Corby N."/>
            <person name="Connor R.E."/>
            <person name="David R."/>
            <person name="Davies J."/>
            <person name="Davis C."/>
            <person name="Davis J."/>
            <person name="Delgado O."/>
            <person name="Deshazo D."/>
            <person name="Dhami P."/>
            <person name="Ding Y."/>
            <person name="Dinh H."/>
            <person name="Dodsworth S."/>
            <person name="Draper H."/>
            <person name="Dugan-Rocha S."/>
            <person name="Dunham A."/>
            <person name="Dunn M."/>
            <person name="Durbin K.J."/>
            <person name="Dutta I."/>
            <person name="Eades T."/>
            <person name="Ellwood M."/>
            <person name="Emery-Cohen A."/>
            <person name="Errington H."/>
            <person name="Evans K.L."/>
            <person name="Faulkner L."/>
            <person name="Francis F."/>
            <person name="Frankland J."/>
            <person name="Fraser A.E."/>
            <person name="Galgoczy P."/>
            <person name="Gilbert J."/>
            <person name="Gill R."/>
            <person name="Gloeckner G."/>
            <person name="Gregory S.G."/>
            <person name="Gribble S."/>
            <person name="Griffiths C."/>
            <person name="Grocock R."/>
            <person name="Gu Y."/>
            <person name="Gwilliam R."/>
            <person name="Hamilton C."/>
            <person name="Hart E.A."/>
            <person name="Hawes A."/>
            <person name="Heath P.D."/>
            <person name="Heitmann K."/>
            <person name="Hennig S."/>
            <person name="Hernandez J."/>
            <person name="Hinzmann B."/>
            <person name="Ho S."/>
            <person name="Hoffs M."/>
            <person name="Howden P.J."/>
            <person name="Huckle E.J."/>
            <person name="Hume J."/>
            <person name="Hunt P.J."/>
            <person name="Hunt A.R."/>
            <person name="Isherwood J."/>
            <person name="Jacob L."/>
            <person name="Johnson D."/>
            <person name="Jones S."/>
            <person name="de Jong P.J."/>
            <person name="Joseph S.S."/>
            <person name="Keenan S."/>
            <person name="Kelly S."/>
            <person name="Kershaw J.K."/>
            <person name="Khan Z."/>
            <person name="Kioschis P."/>
            <person name="Klages S."/>
            <person name="Knights A.J."/>
            <person name="Kosiura A."/>
            <person name="Kovar-Smith C."/>
            <person name="Laird G.K."/>
            <person name="Langford C."/>
            <person name="Lawlor S."/>
            <person name="Leversha M."/>
            <person name="Lewis L."/>
            <person name="Liu W."/>
            <person name="Lloyd C."/>
            <person name="Lloyd D.M."/>
            <person name="Loulseged H."/>
            <person name="Loveland J.E."/>
            <person name="Lovell J.D."/>
            <person name="Lozado R."/>
            <person name="Lu J."/>
            <person name="Lyne R."/>
            <person name="Ma J."/>
            <person name="Maheshwari M."/>
            <person name="Matthews L.H."/>
            <person name="McDowall J."/>
            <person name="McLaren S."/>
            <person name="McMurray A."/>
            <person name="Meidl P."/>
            <person name="Meitinger T."/>
            <person name="Milne S."/>
            <person name="Miner G."/>
            <person name="Mistry S.L."/>
            <person name="Morgan M."/>
            <person name="Morris S."/>
            <person name="Mueller I."/>
            <person name="Mullikin J.C."/>
            <person name="Nguyen N."/>
            <person name="Nordsiek G."/>
            <person name="Nyakatura G."/>
            <person name="O'dell C.N."/>
            <person name="Okwuonu G."/>
            <person name="Palmer S."/>
            <person name="Pandian R."/>
            <person name="Parker D."/>
            <person name="Parrish J."/>
            <person name="Pasternak S."/>
            <person name="Patel D."/>
            <person name="Pearce A.V."/>
            <person name="Pearson D.M."/>
            <person name="Pelan S.E."/>
            <person name="Perez L."/>
            <person name="Porter K.M."/>
            <person name="Ramsey Y."/>
            <person name="Reichwald K."/>
            <person name="Rhodes S."/>
            <person name="Ridler K.A."/>
            <person name="Schlessinger D."/>
            <person name="Schueler M.G."/>
            <person name="Sehra H.K."/>
            <person name="Shaw-Smith C."/>
            <person name="Shen H."/>
            <person name="Sheridan E.M."/>
            <person name="Shownkeen R."/>
            <person name="Skuce C.D."/>
            <person name="Smith M.L."/>
            <person name="Sotheran E.C."/>
            <person name="Steingruber H.E."/>
            <person name="Steward C.A."/>
            <person name="Storey R."/>
            <person name="Swann R.M."/>
            <person name="Swarbreck D."/>
            <person name="Tabor P.E."/>
            <person name="Taudien S."/>
            <person name="Taylor T."/>
            <person name="Teague B."/>
            <person name="Thomas K."/>
            <person name="Thorpe A."/>
            <person name="Timms K."/>
            <person name="Tracey A."/>
            <person name="Trevanion S."/>
            <person name="Tromans A.C."/>
            <person name="d'Urso M."/>
            <person name="Verduzco D."/>
            <person name="Villasana D."/>
            <person name="Waldron L."/>
            <person name="Wall M."/>
            <person name="Wang Q."/>
            <person name="Warren J."/>
            <person name="Warry G.L."/>
            <person name="Wei X."/>
            <person name="West A."/>
            <person name="Whitehead S.L."/>
            <person name="Whiteley M.N."/>
            <person name="Wilkinson J.E."/>
            <person name="Willey D.L."/>
            <person name="Williams G."/>
            <person name="Williams L."/>
            <person name="Williamson A."/>
            <person name="Williamson H."/>
            <person name="Wilming L."/>
            <person name="Woodmansey R.L."/>
            <person name="Wray P.W."/>
            <person name="Yen J."/>
            <person name="Zhang J."/>
            <person name="Zhou J."/>
            <person name="Zoghbi H."/>
            <person name="Zorilla S."/>
            <person name="Buck D."/>
            <person name="Reinhardt R."/>
            <person name="Poustka A."/>
            <person name="Rosenthal A."/>
            <person name="Lehrach H."/>
            <person name="Meindl A."/>
            <person name="Minx P.J."/>
            <person name="Hillier L.W."/>
            <person name="Willard H.F."/>
            <person name="Wilson R.K."/>
            <person name="Waterston R.H."/>
            <person name="Rice C.M."/>
            <person name="Vaudin M."/>
            <person name="Coulson A."/>
            <person name="Nelson D.L."/>
            <person name="Weinstock G."/>
            <person name="Sulston J.E."/>
            <person name="Durbin R.M."/>
            <person name="Hubbard T."/>
            <person name="Gibbs R.A."/>
            <person name="Beck S."/>
            <person name="Rogers J."/>
            <person name="Bentley D.R."/>
        </authorList>
    </citation>
    <scope>NUCLEOTIDE SEQUENCE [LARGE SCALE GENOMIC DNA]</scope>
</reference>
<reference key="4">
    <citation type="submission" date="2005-07" db="EMBL/GenBank/DDBJ databases">
        <authorList>
            <person name="Mural R.J."/>
            <person name="Istrail S."/>
            <person name="Sutton G.G."/>
            <person name="Florea L."/>
            <person name="Halpern A.L."/>
            <person name="Mobarry C.M."/>
            <person name="Lippert R."/>
            <person name="Walenz B."/>
            <person name="Shatkay H."/>
            <person name="Dew I."/>
            <person name="Miller J.R."/>
            <person name="Flanigan M.J."/>
            <person name="Edwards N.J."/>
            <person name="Bolanos R."/>
            <person name="Fasulo D."/>
            <person name="Halldorsson B.V."/>
            <person name="Hannenhalli S."/>
            <person name="Turner R."/>
            <person name="Yooseph S."/>
            <person name="Lu F."/>
            <person name="Nusskern D.R."/>
            <person name="Shue B.C."/>
            <person name="Zheng X.H."/>
            <person name="Zhong F."/>
            <person name="Delcher A.L."/>
            <person name="Huson D.H."/>
            <person name="Kravitz S.A."/>
            <person name="Mouchard L."/>
            <person name="Reinert K."/>
            <person name="Remington K.A."/>
            <person name="Clark A.G."/>
            <person name="Waterman M.S."/>
            <person name="Eichler E.E."/>
            <person name="Adams M.D."/>
            <person name="Hunkapiller M.W."/>
            <person name="Myers E.W."/>
            <person name="Venter J.C."/>
        </authorList>
    </citation>
    <scope>NUCLEOTIDE SEQUENCE [LARGE SCALE GENOMIC DNA]</scope>
</reference>
<reference key="5">
    <citation type="journal article" date="2004" name="Genome Res.">
        <title>The status, quality, and expansion of the NIH full-length cDNA project: the Mammalian Gene Collection (MGC).</title>
        <authorList>
            <consortium name="The MGC Project Team"/>
        </authorList>
    </citation>
    <scope>NUCLEOTIDE SEQUENCE [LARGE SCALE MRNA]</scope>
    <source>
        <tissue>Lung</tissue>
        <tissue>Testis</tissue>
    </source>
</reference>
<reference key="6">
    <citation type="journal article" date="2005" name="J. Biol. Chem.">
        <title>Expression of human CTP synthetase in Saccharomyces cerevisiae reveals phosphorylation by protein kinase A.</title>
        <authorList>
            <person name="Han G.-S."/>
            <person name="Sreenivas A."/>
            <person name="Choi M.-G."/>
            <person name="Chang Y.-F."/>
            <person name="Martin S.S."/>
            <person name="Baldwin E.P."/>
            <person name="Carman G.M."/>
        </authorList>
    </citation>
    <scope>FUNCTION</scope>
</reference>
<reference key="7">
    <citation type="journal article" date="2006" name="Cell">
        <title>Global, in vivo, and site-specific phosphorylation dynamics in signaling networks.</title>
        <authorList>
            <person name="Olsen J.V."/>
            <person name="Blagoev B."/>
            <person name="Gnad F."/>
            <person name="Macek B."/>
            <person name="Kumar C."/>
            <person name="Mortensen P."/>
            <person name="Mann M."/>
        </authorList>
    </citation>
    <scope>PHOSPHORYLATION [LARGE SCALE ANALYSIS] AT SER-571</scope>
    <scope>IDENTIFICATION BY MASS SPECTROMETRY [LARGE SCALE ANALYSIS]</scope>
    <source>
        <tissue>Cervix carcinoma</tissue>
    </source>
</reference>
<reference key="8">
    <citation type="journal article" date="2008" name="Proc. Natl. Acad. Sci. U.S.A.">
        <title>A quantitative atlas of mitotic phosphorylation.</title>
        <authorList>
            <person name="Dephoure N."/>
            <person name="Zhou C."/>
            <person name="Villen J."/>
            <person name="Beausoleil S.A."/>
            <person name="Bakalarski C.E."/>
            <person name="Elledge S.J."/>
            <person name="Gygi S.P."/>
        </authorList>
    </citation>
    <scope>PHOSPHORYLATION [LARGE SCALE ANALYSIS] AT SER-568; SER-571 AND SER-574</scope>
    <scope>IDENTIFICATION BY MASS SPECTROMETRY [LARGE SCALE ANALYSIS]</scope>
    <source>
        <tissue>Cervix carcinoma</tissue>
    </source>
</reference>
<reference key="9">
    <citation type="journal article" date="2010" name="Sci. Signal.">
        <title>Quantitative phosphoproteomics reveals widespread full phosphorylation site occupancy during mitosis.</title>
        <authorList>
            <person name="Olsen J.V."/>
            <person name="Vermeulen M."/>
            <person name="Santamaria A."/>
            <person name="Kumar C."/>
            <person name="Miller M.L."/>
            <person name="Jensen L.J."/>
            <person name="Gnad F."/>
            <person name="Cox J."/>
            <person name="Jensen T.S."/>
            <person name="Nigg E.A."/>
            <person name="Brunak S."/>
            <person name="Mann M."/>
        </authorList>
    </citation>
    <scope>PHOSPHORYLATION [LARGE SCALE ANALYSIS] AT SER-568; SER-571 AND SER-574</scope>
    <scope>IDENTIFICATION BY MASS SPECTROMETRY [LARGE SCALE ANALYSIS]</scope>
    <source>
        <tissue>Cervix carcinoma</tissue>
    </source>
</reference>
<reference key="10">
    <citation type="journal article" date="2011" name="BMC Syst. Biol.">
        <title>Initial characterization of the human central proteome.</title>
        <authorList>
            <person name="Burkard T.R."/>
            <person name="Planyavsky M."/>
            <person name="Kaupe I."/>
            <person name="Breitwieser F.P."/>
            <person name="Buerckstuemmer T."/>
            <person name="Bennett K.L."/>
            <person name="Superti-Furga G."/>
            <person name="Colinge J."/>
        </authorList>
    </citation>
    <scope>IDENTIFICATION BY MASS SPECTROMETRY [LARGE SCALE ANALYSIS]</scope>
</reference>
<reference key="11">
    <citation type="journal article" date="2011" name="Sci. Signal.">
        <title>System-wide temporal characterization of the proteome and phosphoproteome of human embryonic stem cell differentiation.</title>
        <authorList>
            <person name="Rigbolt K.T."/>
            <person name="Prokhorova T.A."/>
            <person name="Akimov V."/>
            <person name="Henningsen J."/>
            <person name="Johansen P.T."/>
            <person name="Kratchmarova I."/>
            <person name="Kassem M."/>
            <person name="Mann M."/>
            <person name="Olsen J.V."/>
            <person name="Blagoev B."/>
        </authorList>
    </citation>
    <scope>PHOSPHORYLATION [LARGE SCALE ANALYSIS] AT SER-568 AND SER-571</scope>
    <scope>IDENTIFICATION BY MASS SPECTROMETRY [LARGE SCALE ANALYSIS]</scope>
</reference>
<reference key="12">
    <citation type="journal article" date="2013" name="J. Proteome Res.">
        <title>Toward a comprehensive characterization of a human cancer cell phosphoproteome.</title>
        <authorList>
            <person name="Zhou H."/>
            <person name="Di Palma S."/>
            <person name="Preisinger C."/>
            <person name="Peng M."/>
            <person name="Polat A.N."/>
            <person name="Heck A.J."/>
            <person name="Mohammed S."/>
        </authorList>
    </citation>
    <scope>PHOSPHORYLATION [LARGE SCALE ANALYSIS] AT SER-568; SER-571 AND SER-574</scope>
    <scope>IDENTIFICATION BY MASS SPECTROMETRY [LARGE SCALE ANALYSIS]</scope>
    <source>
        <tissue>Cervix carcinoma</tissue>
        <tissue>Erythroleukemia</tissue>
    </source>
</reference>
<reference key="13">
    <citation type="journal article" date="2014" name="J. Proteomics">
        <title>An enzyme assisted RP-RPLC approach for in-depth analysis of human liver phosphoproteome.</title>
        <authorList>
            <person name="Bian Y."/>
            <person name="Song C."/>
            <person name="Cheng K."/>
            <person name="Dong M."/>
            <person name="Wang F."/>
            <person name="Huang J."/>
            <person name="Sun D."/>
            <person name="Wang L."/>
            <person name="Ye M."/>
            <person name="Zou H."/>
        </authorList>
    </citation>
    <scope>PHOSPHORYLATION [LARGE SCALE ANALYSIS] AT SER-568; SER-571 AND SER-574</scope>
    <scope>IDENTIFICATION BY MASS SPECTROMETRY [LARGE SCALE ANALYSIS]</scope>
    <source>
        <tissue>Liver</tissue>
    </source>
</reference>
<gene>
    <name type="primary">CTPS2</name>
</gene>